<name>RS13_STAS1</name>
<comment type="function">
    <text evidence="1">Located at the top of the head of the 30S subunit, it contacts several helices of the 16S rRNA. In the 70S ribosome it contacts the 23S rRNA (bridge B1a) and protein L5 of the 50S subunit (bridge B1b), connecting the 2 subunits; these bridges are implicated in subunit movement. Contacts the tRNAs in the A and P-sites.</text>
</comment>
<comment type="subunit">
    <text evidence="1">Part of the 30S ribosomal subunit. Forms a loose heterodimer with protein S19. Forms two bridges to the 50S subunit in the 70S ribosome.</text>
</comment>
<comment type="similarity">
    <text evidence="1">Belongs to the universal ribosomal protein uS13 family.</text>
</comment>
<feature type="chain" id="PRO_0000132143" description="Small ribosomal subunit protein uS13">
    <location>
        <begin position="1"/>
        <end position="121"/>
    </location>
</feature>
<feature type="region of interest" description="Disordered" evidence="2">
    <location>
        <begin position="91"/>
        <end position="121"/>
    </location>
</feature>
<protein>
    <recommendedName>
        <fullName evidence="1">Small ribosomal subunit protein uS13</fullName>
    </recommendedName>
    <alternativeName>
        <fullName evidence="3">30S ribosomal protein S13</fullName>
    </alternativeName>
</protein>
<dbReference type="EMBL" id="AP008934">
    <property type="protein sequence ID" value="BAE17832.1"/>
    <property type="molecule type" value="Genomic_DNA"/>
</dbReference>
<dbReference type="RefSeq" id="WP_011302605.1">
    <property type="nucleotide sequence ID" value="NZ_MTGA01000036.1"/>
</dbReference>
<dbReference type="SMR" id="Q49ZE4"/>
<dbReference type="GeneID" id="3615986"/>
<dbReference type="KEGG" id="ssp:SSP0687"/>
<dbReference type="PATRIC" id="fig|342451.11.peg.689"/>
<dbReference type="eggNOG" id="COG0099">
    <property type="taxonomic scope" value="Bacteria"/>
</dbReference>
<dbReference type="HOGENOM" id="CLU_103849_1_1_9"/>
<dbReference type="OrthoDB" id="9803610at2"/>
<dbReference type="Proteomes" id="UP000006371">
    <property type="component" value="Chromosome"/>
</dbReference>
<dbReference type="GO" id="GO:0005829">
    <property type="term" value="C:cytosol"/>
    <property type="evidence" value="ECO:0007669"/>
    <property type="project" value="TreeGrafter"/>
</dbReference>
<dbReference type="GO" id="GO:0015935">
    <property type="term" value="C:small ribosomal subunit"/>
    <property type="evidence" value="ECO:0007669"/>
    <property type="project" value="TreeGrafter"/>
</dbReference>
<dbReference type="GO" id="GO:0019843">
    <property type="term" value="F:rRNA binding"/>
    <property type="evidence" value="ECO:0007669"/>
    <property type="project" value="UniProtKB-UniRule"/>
</dbReference>
<dbReference type="GO" id="GO:0003735">
    <property type="term" value="F:structural constituent of ribosome"/>
    <property type="evidence" value="ECO:0007669"/>
    <property type="project" value="InterPro"/>
</dbReference>
<dbReference type="GO" id="GO:0000049">
    <property type="term" value="F:tRNA binding"/>
    <property type="evidence" value="ECO:0007669"/>
    <property type="project" value="UniProtKB-UniRule"/>
</dbReference>
<dbReference type="GO" id="GO:0006412">
    <property type="term" value="P:translation"/>
    <property type="evidence" value="ECO:0007669"/>
    <property type="project" value="UniProtKB-UniRule"/>
</dbReference>
<dbReference type="FunFam" id="1.10.8.50:FF:000001">
    <property type="entry name" value="30S ribosomal protein S13"/>
    <property type="match status" value="1"/>
</dbReference>
<dbReference type="FunFam" id="4.10.910.10:FF:000001">
    <property type="entry name" value="30S ribosomal protein S13"/>
    <property type="match status" value="1"/>
</dbReference>
<dbReference type="Gene3D" id="1.10.8.50">
    <property type="match status" value="1"/>
</dbReference>
<dbReference type="Gene3D" id="4.10.910.10">
    <property type="entry name" value="30s ribosomal protein s13, domain 2"/>
    <property type="match status" value="1"/>
</dbReference>
<dbReference type="HAMAP" id="MF_01315">
    <property type="entry name" value="Ribosomal_uS13"/>
    <property type="match status" value="1"/>
</dbReference>
<dbReference type="InterPro" id="IPR027437">
    <property type="entry name" value="Rbsml_uS13_C"/>
</dbReference>
<dbReference type="InterPro" id="IPR001892">
    <property type="entry name" value="Ribosomal_uS13"/>
</dbReference>
<dbReference type="InterPro" id="IPR010979">
    <property type="entry name" value="Ribosomal_uS13-like_H2TH"/>
</dbReference>
<dbReference type="InterPro" id="IPR019980">
    <property type="entry name" value="Ribosomal_uS13_bac-type"/>
</dbReference>
<dbReference type="InterPro" id="IPR018269">
    <property type="entry name" value="Ribosomal_uS13_CS"/>
</dbReference>
<dbReference type="NCBIfam" id="TIGR03631">
    <property type="entry name" value="uS13_bact"/>
    <property type="match status" value="1"/>
</dbReference>
<dbReference type="PANTHER" id="PTHR10871">
    <property type="entry name" value="30S RIBOSOMAL PROTEIN S13/40S RIBOSOMAL PROTEIN S18"/>
    <property type="match status" value="1"/>
</dbReference>
<dbReference type="PANTHER" id="PTHR10871:SF1">
    <property type="entry name" value="SMALL RIBOSOMAL SUBUNIT PROTEIN US13M"/>
    <property type="match status" value="1"/>
</dbReference>
<dbReference type="Pfam" id="PF00416">
    <property type="entry name" value="Ribosomal_S13"/>
    <property type="match status" value="1"/>
</dbReference>
<dbReference type="PIRSF" id="PIRSF002134">
    <property type="entry name" value="Ribosomal_S13"/>
    <property type="match status" value="1"/>
</dbReference>
<dbReference type="SUPFAM" id="SSF46946">
    <property type="entry name" value="S13-like H2TH domain"/>
    <property type="match status" value="1"/>
</dbReference>
<dbReference type="PROSITE" id="PS00646">
    <property type="entry name" value="RIBOSOMAL_S13_1"/>
    <property type="match status" value="1"/>
</dbReference>
<dbReference type="PROSITE" id="PS50159">
    <property type="entry name" value="RIBOSOMAL_S13_2"/>
    <property type="match status" value="1"/>
</dbReference>
<gene>
    <name evidence="1" type="primary">rpsM</name>
    <name type="ordered locus">SSP0687</name>
</gene>
<keyword id="KW-1185">Reference proteome</keyword>
<keyword id="KW-0687">Ribonucleoprotein</keyword>
<keyword id="KW-0689">Ribosomal protein</keyword>
<keyword id="KW-0694">RNA-binding</keyword>
<keyword id="KW-0699">rRNA-binding</keyword>
<keyword id="KW-0820">tRNA-binding</keyword>
<accession>Q49ZE4</accession>
<evidence type="ECO:0000255" key="1">
    <source>
        <dbReference type="HAMAP-Rule" id="MF_01315"/>
    </source>
</evidence>
<evidence type="ECO:0000256" key="2">
    <source>
        <dbReference type="SAM" id="MobiDB-lite"/>
    </source>
</evidence>
<evidence type="ECO:0000305" key="3"/>
<sequence length="121" mass="13815">MARIAGVDIPREKRIVISLTYVYGIGTTTANKIAEEANVSPETRVKDLTDDELGRIREIVDNYKVEGDLRREQNLNIKRLMEISSYRGIRHRRGLPVRGQKTKNNARTRKGPVKTVANKKK</sequence>
<organism>
    <name type="scientific">Staphylococcus saprophyticus subsp. saprophyticus (strain ATCC 15305 / DSM 20229 / NCIMB 8711 / NCTC 7292 / S-41)</name>
    <dbReference type="NCBI Taxonomy" id="342451"/>
    <lineage>
        <taxon>Bacteria</taxon>
        <taxon>Bacillati</taxon>
        <taxon>Bacillota</taxon>
        <taxon>Bacilli</taxon>
        <taxon>Bacillales</taxon>
        <taxon>Staphylococcaceae</taxon>
        <taxon>Staphylococcus</taxon>
    </lineage>
</organism>
<reference key="1">
    <citation type="journal article" date="2005" name="Proc. Natl. Acad. Sci. U.S.A.">
        <title>Whole genome sequence of Staphylococcus saprophyticus reveals the pathogenesis of uncomplicated urinary tract infection.</title>
        <authorList>
            <person name="Kuroda M."/>
            <person name="Yamashita A."/>
            <person name="Hirakawa H."/>
            <person name="Kumano M."/>
            <person name="Morikawa K."/>
            <person name="Higashide M."/>
            <person name="Maruyama A."/>
            <person name="Inose Y."/>
            <person name="Matoba K."/>
            <person name="Toh H."/>
            <person name="Kuhara S."/>
            <person name="Hattori M."/>
            <person name="Ohta T."/>
        </authorList>
    </citation>
    <scope>NUCLEOTIDE SEQUENCE [LARGE SCALE GENOMIC DNA]</scope>
    <source>
        <strain>ATCC 15305 / DSM 20229 / NCIMB 8711 / NCTC 7292 / S-41</strain>
    </source>
</reference>
<proteinExistence type="inferred from homology"/>